<keyword id="KW-0560">Oxidoreductase</keyword>
<organism>
    <name type="scientific">Emericella variicolor</name>
    <name type="common">Aspergillus stellatus</name>
    <dbReference type="NCBI Taxonomy" id="1549217"/>
    <lineage>
        <taxon>Eukaryota</taxon>
        <taxon>Fungi</taxon>
        <taxon>Dikarya</taxon>
        <taxon>Ascomycota</taxon>
        <taxon>Pezizomycotina</taxon>
        <taxon>Eurotiomycetes</taxon>
        <taxon>Eurotiomycetidae</taxon>
        <taxon>Eurotiales</taxon>
        <taxon>Aspergillaceae</taxon>
        <taxon>Aspergillus</taxon>
        <taxon>Aspergillus subgen. Nidulantes</taxon>
    </lineage>
</organism>
<proteinExistence type="evidence at protein level"/>
<protein>
    <recommendedName>
        <fullName evidence="2">Oxidoreductase andH</fullName>
        <ecNumber evidence="4">1.-.-.-</ecNumber>
    </recommendedName>
    <alternativeName>
        <fullName evidence="2">Anditomin synthesis protein H</fullName>
    </alternativeName>
</protein>
<accession>A0A097ZPD4</accession>
<dbReference type="EC" id="1.-.-.-" evidence="4"/>
<dbReference type="EMBL" id="AB981314">
    <property type="protein sequence ID" value="BAP81862.1"/>
    <property type="molecule type" value="Genomic_DNA"/>
</dbReference>
<dbReference type="SMR" id="A0A097ZPD4"/>
<dbReference type="BioCyc" id="MetaCyc:MONOMER-19055"/>
<dbReference type="UniPathway" id="UPA00213"/>
<dbReference type="GO" id="GO:0016491">
    <property type="term" value="F:oxidoreductase activity"/>
    <property type="evidence" value="ECO:0007669"/>
    <property type="project" value="UniProtKB-KW"/>
</dbReference>
<dbReference type="GO" id="GO:0016114">
    <property type="term" value="P:terpenoid biosynthetic process"/>
    <property type="evidence" value="ECO:0007669"/>
    <property type="project" value="UniProtKB-UniPathway"/>
</dbReference>
<dbReference type="Gene3D" id="3.40.50.720">
    <property type="entry name" value="NAD(P)-binding Rossmann-like Domain"/>
    <property type="match status" value="1"/>
</dbReference>
<dbReference type="InterPro" id="IPR036291">
    <property type="entry name" value="NAD(P)-bd_dom_sf"/>
</dbReference>
<dbReference type="InterPro" id="IPR002347">
    <property type="entry name" value="SDR_fam"/>
</dbReference>
<dbReference type="InterPro" id="IPR052228">
    <property type="entry name" value="Sec_Metab_Biosynth_Oxidored"/>
</dbReference>
<dbReference type="PANTHER" id="PTHR47534:SF3">
    <property type="entry name" value="ALCOHOL DEHYDROGENASE-LIKE C-TERMINAL DOMAIN-CONTAINING PROTEIN"/>
    <property type="match status" value="1"/>
</dbReference>
<dbReference type="PANTHER" id="PTHR47534">
    <property type="entry name" value="YALI0E05731P"/>
    <property type="match status" value="1"/>
</dbReference>
<dbReference type="Pfam" id="PF00106">
    <property type="entry name" value="adh_short"/>
    <property type="match status" value="1"/>
</dbReference>
<dbReference type="PRINTS" id="PR00081">
    <property type="entry name" value="GDHRDH"/>
</dbReference>
<dbReference type="SUPFAM" id="SSF51735">
    <property type="entry name" value="NAD(P)-binding Rossmann-fold domains"/>
    <property type="match status" value="1"/>
</dbReference>
<reference key="1">
    <citation type="journal article" date="2014" name="J. Am. Chem. Soc.">
        <title>Complete biosynthetic pathway of anditomin: nature's sophisticated synthetic route to a complex fungal meroterpenoid.</title>
        <authorList>
            <person name="Matsuda Y."/>
            <person name="Wakimoto T."/>
            <person name="Mori T."/>
            <person name="Awakawa T."/>
            <person name="Abe I."/>
        </authorList>
    </citation>
    <scope>NUCLEOTIDE SEQUENCE [GENOMIC DNA]</scope>
    <scope>FUNCTION</scope>
    <scope>CATALYTIC ACTIVITY</scope>
    <scope>DISRUPTION PHENOTYPE</scope>
    <source>
        <strain>ATCC 12069 / CBS 136.55 / IMI 60316 / NBRC 32302</strain>
    </source>
</reference>
<comment type="function">
    <text evidence="1">Oxidoreductase; part of the gene cluster that mediates the biosynthesis of anditomin, a fungal meroterpenoid (PubMed:25216349). The first step of the pathway is the synthesis of 3,5-dimethylorsellinic acid (DMOA) by the polyketide synthase andM (PubMed:25216349). DMOA is then converted to the phthalide compound 5,7-dihydroxy-4,6-dimethylphthalide (DHDMP) by the cytochrome P450 monooxygenase andK, which is further prenylated by the prenyltransferase andD to yield farnesyl-DHDMP (PubMed:25216349). Further epoxidation by the FAD-dependent monooxygenase andE leads to epoxyfarnesyl-DHDMP (PubMed:25216349). The next step involves the terpene cyclase andB that converts epoxyfarnesyl-DHDMP into preandiloid A through opening of the epoxide ring followed by the cyclization of the farnesyl moiety (PubMed:25216349). Preandiloid A is in turn oxidized at the C-3 hydroxyl group to yield preandiloid B by the dehydrogenase andC (PubMed:25216349). The dioxygenase andA is solely responsible for the dehydrogenation of preandiloid B leading to the enone preandiloid C, as well as for the intriguing structural rearrangement to generate the bicyclo[2.2.2]octane core, transforming preandiloid C into andiconin (PubMed:25216349). FAD-binding monooxygenase andJ then produces andilesin D which is reduced by dehydrogenase andI to yield andilesin A (PubMed:25216349). Action of acetyltransferase andG followed by a spontaneous acetate elimination leads then to andilesin B, which is in turn substrate of the short chain dehydrogenase andH to yield andilesin C (PubMed:25216349). Finally, the dioxygenase andF catalyzes the transformation of andilesin C to anditomin (PubMed:25216349).</text>
</comment>
<comment type="pathway">
    <text evidence="1">Secondary metabolite biosynthesis; terpenoid biosynthesis.</text>
</comment>
<comment type="disruption phenotype">
    <text evidence="1">Impairs the synthesis of anditomin but accumulates andilesin A (PubMed:25216349).</text>
</comment>
<comment type="similarity">
    <text evidence="3">Belongs to the NmrA-type oxidoreductase family.</text>
</comment>
<evidence type="ECO:0000269" key="1">
    <source>
    </source>
</evidence>
<evidence type="ECO:0000303" key="2">
    <source>
    </source>
</evidence>
<evidence type="ECO:0000305" key="3"/>
<evidence type="ECO:0000305" key="4">
    <source>
    </source>
</evidence>
<name>ANDH_EMEVA</name>
<gene>
    <name evidence="2" type="primary">andH</name>
</gene>
<feature type="chain" id="PRO_0000436584" description="Oxidoreductase andH">
    <location>
        <begin position="1"/>
        <end position="337"/>
    </location>
</feature>
<sequence length="337" mass="37041">MPSLSQIRQANELLEDSHSEIVAAFVGGTSGVGEEAAKRLASCVRKPEIFIVGRNEESAARVLAELRNANPQGSYQFVKVDISLLRNVDRACEAIRHKTQTLDLLFISAGSALVAREDTEEGLEKNLVERYYARMRFTQSLLPLLQASNKSPRVVSVLLGGFEIELETDNLDLTKPRTAIYSTRHAATMTSLSMEHLATVYRSISFVHIYPGMVKTPLLDKGLGRFLARIAWILYWPFSITLEQSGQYNVYMATSAAYPPLSPENQQGAGASLAEGGEICIGSTGKVGAGSYILNYDGANRTNVKLMEGYRVRDYAQHIWTHTLSTFQTVTGSAEPA</sequence>